<gene>
    <name evidence="1" type="primary">dps</name>
    <name type="ordered locus">Ent638_1299</name>
</gene>
<organism>
    <name type="scientific">Enterobacter sp. (strain 638)</name>
    <dbReference type="NCBI Taxonomy" id="399742"/>
    <lineage>
        <taxon>Bacteria</taxon>
        <taxon>Pseudomonadati</taxon>
        <taxon>Pseudomonadota</taxon>
        <taxon>Gammaproteobacteria</taxon>
        <taxon>Enterobacterales</taxon>
        <taxon>Enterobacteriaceae</taxon>
        <taxon>Enterobacter</taxon>
    </lineage>
</organism>
<dbReference type="EC" id="1.16.-.-" evidence="1"/>
<dbReference type="EMBL" id="CP000653">
    <property type="protein sequence ID" value="ABP59980.1"/>
    <property type="molecule type" value="Genomic_DNA"/>
</dbReference>
<dbReference type="RefSeq" id="WP_012016699.1">
    <property type="nucleotide sequence ID" value="NC_009436.1"/>
</dbReference>
<dbReference type="SMR" id="A4W8F0"/>
<dbReference type="STRING" id="399742.Ent638_1299"/>
<dbReference type="GeneID" id="93308395"/>
<dbReference type="KEGG" id="ent:Ent638_1299"/>
<dbReference type="eggNOG" id="COG0783">
    <property type="taxonomic scope" value="Bacteria"/>
</dbReference>
<dbReference type="HOGENOM" id="CLU_098183_1_2_6"/>
<dbReference type="OrthoDB" id="9797687at2"/>
<dbReference type="Proteomes" id="UP000000230">
    <property type="component" value="Chromosome"/>
</dbReference>
<dbReference type="GO" id="GO:0005737">
    <property type="term" value="C:cytoplasm"/>
    <property type="evidence" value="ECO:0007669"/>
    <property type="project" value="UniProtKB-SubCell"/>
</dbReference>
<dbReference type="GO" id="GO:0003677">
    <property type="term" value="F:DNA binding"/>
    <property type="evidence" value="ECO:0007669"/>
    <property type="project" value="UniProtKB-UniRule"/>
</dbReference>
<dbReference type="GO" id="GO:0008199">
    <property type="term" value="F:ferric iron binding"/>
    <property type="evidence" value="ECO:0007669"/>
    <property type="project" value="UniProtKB-UniRule"/>
</dbReference>
<dbReference type="GO" id="GO:0016722">
    <property type="term" value="F:oxidoreductase activity, acting on metal ions"/>
    <property type="evidence" value="ECO:0007669"/>
    <property type="project" value="InterPro"/>
</dbReference>
<dbReference type="GO" id="GO:0030261">
    <property type="term" value="P:chromosome condensation"/>
    <property type="evidence" value="ECO:0007669"/>
    <property type="project" value="UniProtKB-KW"/>
</dbReference>
<dbReference type="GO" id="GO:0006879">
    <property type="term" value="P:intracellular iron ion homeostasis"/>
    <property type="evidence" value="ECO:0007669"/>
    <property type="project" value="UniProtKB-KW"/>
</dbReference>
<dbReference type="CDD" id="cd01043">
    <property type="entry name" value="DPS"/>
    <property type="match status" value="1"/>
</dbReference>
<dbReference type="FunFam" id="1.20.1260.10:FF:000003">
    <property type="entry name" value="DNA protection during starvation protein"/>
    <property type="match status" value="1"/>
</dbReference>
<dbReference type="Gene3D" id="1.20.1260.10">
    <property type="match status" value="1"/>
</dbReference>
<dbReference type="HAMAP" id="MF_01441">
    <property type="entry name" value="Dps"/>
    <property type="match status" value="1"/>
</dbReference>
<dbReference type="InterPro" id="IPR002177">
    <property type="entry name" value="DPS_DNA-bd"/>
</dbReference>
<dbReference type="InterPro" id="IPR023188">
    <property type="entry name" value="DPS_DNA-bd_CS"/>
</dbReference>
<dbReference type="InterPro" id="IPR023067">
    <property type="entry name" value="Dps_gammaproteobac"/>
</dbReference>
<dbReference type="InterPro" id="IPR012347">
    <property type="entry name" value="Ferritin-like"/>
</dbReference>
<dbReference type="InterPro" id="IPR009078">
    <property type="entry name" value="Ferritin-like_SF"/>
</dbReference>
<dbReference type="InterPro" id="IPR008331">
    <property type="entry name" value="Ferritin_DPS_dom"/>
</dbReference>
<dbReference type="NCBIfam" id="NF006975">
    <property type="entry name" value="PRK09448.1"/>
    <property type="match status" value="1"/>
</dbReference>
<dbReference type="PANTHER" id="PTHR42932:SF3">
    <property type="entry name" value="DNA PROTECTION DURING STARVATION PROTEIN"/>
    <property type="match status" value="1"/>
</dbReference>
<dbReference type="PANTHER" id="PTHR42932">
    <property type="entry name" value="GENERAL STRESS PROTEIN 20U"/>
    <property type="match status" value="1"/>
</dbReference>
<dbReference type="Pfam" id="PF00210">
    <property type="entry name" value="Ferritin"/>
    <property type="match status" value="1"/>
</dbReference>
<dbReference type="PIRSF" id="PIRSF005900">
    <property type="entry name" value="Dps"/>
    <property type="match status" value="1"/>
</dbReference>
<dbReference type="PRINTS" id="PR01346">
    <property type="entry name" value="HELNAPAPROT"/>
</dbReference>
<dbReference type="SUPFAM" id="SSF47240">
    <property type="entry name" value="Ferritin-like"/>
    <property type="match status" value="1"/>
</dbReference>
<dbReference type="PROSITE" id="PS00818">
    <property type="entry name" value="DPS_1"/>
    <property type="match status" value="1"/>
</dbReference>
<dbReference type="PROSITE" id="PS00819">
    <property type="entry name" value="DPS_2"/>
    <property type="match status" value="1"/>
</dbReference>
<evidence type="ECO:0000255" key="1">
    <source>
        <dbReference type="HAMAP-Rule" id="MF_01441"/>
    </source>
</evidence>
<keyword id="KW-0963">Cytoplasm</keyword>
<keyword id="KW-0226">DNA condensation</keyword>
<keyword id="KW-0238">DNA-binding</keyword>
<keyword id="KW-0408">Iron</keyword>
<keyword id="KW-0409">Iron storage</keyword>
<keyword id="KW-0479">Metal-binding</keyword>
<keyword id="KW-0560">Oxidoreductase</keyword>
<comment type="function">
    <text evidence="1">During stationary phase, binds the chromosome non-specifically, forming a highly ordered and stable dps-DNA co-crystal within which chromosomal DNA is condensed and protected from diverse damages. It protects DNA from oxidative damage by sequestering intracellular Fe(2+) ion and storing it in the form of Fe(3+) oxyhydroxide mineral, which can be released after reduction. One hydrogen peroxide oxidizes two Fe(2+) ions, which prevents hydroxyl radical production by the Fenton reaction.</text>
</comment>
<comment type="catalytic activity">
    <reaction evidence="1">
        <text>2 Fe(2+) + H2O2 + 2 H(+) = 2 Fe(3+) + 2 H2O</text>
        <dbReference type="Rhea" id="RHEA:48712"/>
        <dbReference type="ChEBI" id="CHEBI:15377"/>
        <dbReference type="ChEBI" id="CHEBI:15378"/>
        <dbReference type="ChEBI" id="CHEBI:16240"/>
        <dbReference type="ChEBI" id="CHEBI:29033"/>
        <dbReference type="ChEBI" id="CHEBI:29034"/>
    </reaction>
</comment>
<comment type="subunit">
    <text evidence="1">Homododecamer. The 12 subunits form a hollow sphere into which the mineral iron core of up to 500 Fe(3+) can be deposited.</text>
</comment>
<comment type="subcellular location">
    <subcellularLocation>
        <location evidence="1">Cytoplasm</location>
    </subcellularLocation>
</comment>
<comment type="similarity">
    <text evidence="1">Belongs to the Dps family.</text>
</comment>
<proteinExistence type="inferred from homology"/>
<reference key="1">
    <citation type="journal article" date="2010" name="PLoS Genet.">
        <title>Genome sequence of the plant growth promoting endophytic bacterium Enterobacter sp. 638.</title>
        <authorList>
            <person name="Taghavi S."/>
            <person name="van der Lelie D."/>
            <person name="Hoffman A."/>
            <person name="Zhang Y.B."/>
            <person name="Walla M.D."/>
            <person name="Vangronsveld J."/>
            <person name="Newman L."/>
            <person name="Monchy S."/>
        </authorList>
    </citation>
    <scope>NUCLEOTIDE SEQUENCE [LARGE SCALE GENOMIC DNA]</scope>
    <source>
        <strain>638</strain>
    </source>
</reference>
<sequence>MSTAKLVKTKASNLLYTRNDVSDSDKKATIELLNRQVIQFIDLSLITKQAHWNMRGANFIAVHEMLDGFRTALVTHLDTMAERAVQLGGVALGTTQVINSKTALKSYPLDIHSVQDHLKELADRYAIVANDVRKAIGEAKDEDTADILTAASRDLDQFLWFIESNIE</sequence>
<feature type="chain" id="PRO_1000068564" description="DNA protection during starvation protein">
    <location>
        <begin position="1"/>
        <end position="167"/>
    </location>
</feature>
<feature type="binding site" evidence="1">
    <location>
        <position position="51"/>
    </location>
    <ligand>
        <name>Fe cation</name>
        <dbReference type="ChEBI" id="CHEBI:24875"/>
    </ligand>
</feature>
<feature type="binding site" evidence="1">
    <location>
        <position position="78"/>
    </location>
    <ligand>
        <name>Fe cation</name>
        <dbReference type="ChEBI" id="CHEBI:24875"/>
    </ligand>
</feature>
<feature type="binding site" evidence="1">
    <location>
        <position position="82"/>
    </location>
    <ligand>
        <name>Fe cation</name>
        <dbReference type="ChEBI" id="CHEBI:24875"/>
    </ligand>
</feature>
<accession>A4W8F0</accession>
<name>DPS_ENT38</name>
<protein>
    <recommendedName>
        <fullName evidence="1">DNA protection during starvation protein</fullName>
        <ecNumber evidence="1">1.16.-.-</ecNumber>
    </recommendedName>
</protein>